<feature type="chain" id="PRO_1000054262" description="Multifunctional CCA protein">
    <location>
        <begin position="1"/>
        <end position="412"/>
    </location>
</feature>
<feature type="domain" description="HD" evidence="1">
    <location>
        <begin position="228"/>
        <end position="329"/>
    </location>
</feature>
<feature type="binding site" evidence="1">
    <location>
        <position position="8"/>
    </location>
    <ligand>
        <name>ATP</name>
        <dbReference type="ChEBI" id="CHEBI:30616"/>
    </ligand>
</feature>
<feature type="binding site" evidence="1">
    <location>
        <position position="8"/>
    </location>
    <ligand>
        <name>CTP</name>
        <dbReference type="ChEBI" id="CHEBI:37563"/>
    </ligand>
</feature>
<feature type="binding site" evidence="1">
    <location>
        <position position="11"/>
    </location>
    <ligand>
        <name>ATP</name>
        <dbReference type="ChEBI" id="CHEBI:30616"/>
    </ligand>
</feature>
<feature type="binding site" evidence="1">
    <location>
        <position position="11"/>
    </location>
    <ligand>
        <name>CTP</name>
        <dbReference type="ChEBI" id="CHEBI:37563"/>
    </ligand>
</feature>
<feature type="binding site" evidence="1">
    <location>
        <position position="21"/>
    </location>
    <ligand>
        <name>Mg(2+)</name>
        <dbReference type="ChEBI" id="CHEBI:18420"/>
    </ligand>
</feature>
<feature type="binding site" evidence="1">
    <location>
        <position position="23"/>
    </location>
    <ligand>
        <name>Mg(2+)</name>
        <dbReference type="ChEBI" id="CHEBI:18420"/>
    </ligand>
</feature>
<feature type="binding site" evidence="1">
    <location>
        <position position="91"/>
    </location>
    <ligand>
        <name>ATP</name>
        <dbReference type="ChEBI" id="CHEBI:30616"/>
    </ligand>
</feature>
<feature type="binding site" evidence="1">
    <location>
        <position position="91"/>
    </location>
    <ligand>
        <name>CTP</name>
        <dbReference type="ChEBI" id="CHEBI:37563"/>
    </ligand>
</feature>
<feature type="binding site" evidence="1">
    <location>
        <position position="137"/>
    </location>
    <ligand>
        <name>ATP</name>
        <dbReference type="ChEBI" id="CHEBI:30616"/>
    </ligand>
</feature>
<feature type="binding site" evidence="1">
    <location>
        <position position="137"/>
    </location>
    <ligand>
        <name>CTP</name>
        <dbReference type="ChEBI" id="CHEBI:37563"/>
    </ligand>
</feature>
<feature type="binding site" evidence="1">
    <location>
        <position position="140"/>
    </location>
    <ligand>
        <name>ATP</name>
        <dbReference type="ChEBI" id="CHEBI:30616"/>
    </ligand>
</feature>
<feature type="binding site" evidence="1">
    <location>
        <position position="140"/>
    </location>
    <ligand>
        <name>CTP</name>
        <dbReference type="ChEBI" id="CHEBI:37563"/>
    </ligand>
</feature>
<dbReference type="EC" id="2.7.7.72" evidence="1"/>
<dbReference type="EC" id="3.1.3.-" evidence="1"/>
<dbReference type="EC" id="3.1.4.-" evidence="1"/>
<dbReference type="EMBL" id="CP000468">
    <property type="protein sequence ID" value="ABJ02568.1"/>
    <property type="molecule type" value="Genomic_DNA"/>
</dbReference>
<dbReference type="RefSeq" id="WP_000708479.1">
    <property type="nucleotide sequence ID" value="NZ_CADILS010000003.1"/>
</dbReference>
<dbReference type="SMR" id="A1AFX8"/>
<dbReference type="KEGG" id="ecv:APECO1_3358"/>
<dbReference type="HOGENOM" id="CLU_015961_1_1_6"/>
<dbReference type="Proteomes" id="UP000008216">
    <property type="component" value="Chromosome"/>
</dbReference>
<dbReference type="GO" id="GO:0005524">
    <property type="term" value="F:ATP binding"/>
    <property type="evidence" value="ECO:0007669"/>
    <property type="project" value="UniProtKB-UniRule"/>
</dbReference>
<dbReference type="GO" id="GO:0004810">
    <property type="term" value="F:CCA tRNA nucleotidyltransferase activity"/>
    <property type="evidence" value="ECO:0007669"/>
    <property type="project" value="UniProtKB-UniRule"/>
</dbReference>
<dbReference type="GO" id="GO:0004112">
    <property type="term" value="F:cyclic-nucleotide phosphodiesterase activity"/>
    <property type="evidence" value="ECO:0007669"/>
    <property type="project" value="UniProtKB-UniRule"/>
</dbReference>
<dbReference type="GO" id="GO:0000287">
    <property type="term" value="F:magnesium ion binding"/>
    <property type="evidence" value="ECO:0007669"/>
    <property type="project" value="UniProtKB-UniRule"/>
</dbReference>
<dbReference type="GO" id="GO:0016791">
    <property type="term" value="F:phosphatase activity"/>
    <property type="evidence" value="ECO:0007669"/>
    <property type="project" value="UniProtKB-UniRule"/>
</dbReference>
<dbReference type="GO" id="GO:0000049">
    <property type="term" value="F:tRNA binding"/>
    <property type="evidence" value="ECO:0007669"/>
    <property type="project" value="UniProtKB-UniRule"/>
</dbReference>
<dbReference type="GO" id="GO:0042245">
    <property type="term" value="P:RNA repair"/>
    <property type="evidence" value="ECO:0007669"/>
    <property type="project" value="UniProtKB-KW"/>
</dbReference>
<dbReference type="GO" id="GO:0001680">
    <property type="term" value="P:tRNA 3'-terminal CCA addition"/>
    <property type="evidence" value="ECO:0007669"/>
    <property type="project" value="UniProtKB-UniRule"/>
</dbReference>
<dbReference type="CDD" id="cd00077">
    <property type="entry name" value="HDc"/>
    <property type="match status" value="1"/>
</dbReference>
<dbReference type="CDD" id="cd05398">
    <property type="entry name" value="NT_ClassII-CCAase"/>
    <property type="match status" value="1"/>
</dbReference>
<dbReference type="FunFam" id="1.10.3090.10:FF:000001">
    <property type="entry name" value="Multifunctional CCA protein"/>
    <property type="match status" value="1"/>
</dbReference>
<dbReference type="FunFam" id="3.30.460.10:FF:000016">
    <property type="entry name" value="Multifunctional CCA protein"/>
    <property type="match status" value="1"/>
</dbReference>
<dbReference type="Gene3D" id="3.30.460.10">
    <property type="entry name" value="Beta Polymerase, domain 2"/>
    <property type="match status" value="1"/>
</dbReference>
<dbReference type="Gene3D" id="1.10.3090.10">
    <property type="entry name" value="cca-adding enzyme, domain 2"/>
    <property type="match status" value="1"/>
</dbReference>
<dbReference type="HAMAP" id="MF_01261">
    <property type="entry name" value="CCA_bact_type1"/>
    <property type="match status" value="1"/>
</dbReference>
<dbReference type="HAMAP" id="MF_01262">
    <property type="entry name" value="CCA_bact_type2"/>
    <property type="match status" value="1"/>
</dbReference>
<dbReference type="InterPro" id="IPR012006">
    <property type="entry name" value="CCA_bact"/>
</dbReference>
<dbReference type="InterPro" id="IPR003607">
    <property type="entry name" value="HD/PDEase_dom"/>
</dbReference>
<dbReference type="InterPro" id="IPR006674">
    <property type="entry name" value="HD_domain"/>
</dbReference>
<dbReference type="InterPro" id="IPR043519">
    <property type="entry name" value="NT_sf"/>
</dbReference>
<dbReference type="InterPro" id="IPR002646">
    <property type="entry name" value="PolA_pol_head_dom"/>
</dbReference>
<dbReference type="InterPro" id="IPR032828">
    <property type="entry name" value="PolyA_RNA-bd"/>
</dbReference>
<dbReference type="InterPro" id="IPR050124">
    <property type="entry name" value="tRNA_CCA-adding_enzyme"/>
</dbReference>
<dbReference type="NCBIfam" id="NF008137">
    <property type="entry name" value="PRK10885.1"/>
    <property type="match status" value="1"/>
</dbReference>
<dbReference type="PANTHER" id="PTHR47545">
    <property type="entry name" value="MULTIFUNCTIONAL CCA PROTEIN"/>
    <property type="match status" value="1"/>
</dbReference>
<dbReference type="PANTHER" id="PTHR47545:SF1">
    <property type="entry name" value="MULTIFUNCTIONAL CCA PROTEIN"/>
    <property type="match status" value="1"/>
</dbReference>
<dbReference type="Pfam" id="PF01966">
    <property type="entry name" value="HD"/>
    <property type="match status" value="1"/>
</dbReference>
<dbReference type="Pfam" id="PF01743">
    <property type="entry name" value="PolyA_pol"/>
    <property type="match status" value="1"/>
</dbReference>
<dbReference type="Pfam" id="PF12627">
    <property type="entry name" value="PolyA_pol_RNAbd"/>
    <property type="match status" value="1"/>
</dbReference>
<dbReference type="PIRSF" id="PIRSF000813">
    <property type="entry name" value="CCA_bact"/>
    <property type="match status" value="1"/>
</dbReference>
<dbReference type="SUPFAM" id="SSF81301">
    <property type="entry name" value="Nucleotidyltransferase"/>
    <property type="match status" value="1"/>
</dbReference>
<dbReference type="SUPFAM" id="SSF81891">
    <property type="entry name" value="Poly A polymerase C-terminal region-like"/>
    <property type="match status" value="1"/>
</dbReference>
<dbReference type="PROSITE" id="PS51831">
    <property type="entry name" value="HD"/>
    <property type="match status" value="1"/>
</dbReference>
<keyword id="KW-0067">ATP-binding</keyword>
<keyword id="KW-0378">Hydrolase</keyword>
<keyword id="KW-0460">Magnesium</keyword>
<keyword id="KW-0479">Metal-binding</keyword>
<keyword id="KW-0511">Multifunctional enzyme</keyword>
<keyword id="KW-0533">Nickel</keyword>
<keyword id="KW-0547">Nucleotide-binding</keyword>
<keyword id="KW-0548">Nucleotidyltransferase</keyword>
<keyword id="KW-1185">Reference proteome</keyword>
<keyword id="KW-0692">RNA repair</keyword>
<keyword id="KW-0694">RNA-binding</keyword>
<keyword id="KW-0808">Transferase</keyword>
<keyword id="KW-0819">tRNA processing</keyword>
<evidence type="ECO:0000255" key="1">
    <source>
        <dbReference type="HAMAP-Rule" id="MF_01261"/>
    </source>
</evidence>
<organism>
    <name type="scientific">Escherichia coli O1:K1 / APEC</name>
    <dbReference type="NCBI Taxonomy" id="405955"/>
    <lineage>
        <taxon>Bacteria</taxon>
        <taxon>Pseudomonadati</taxon>
        <taxon>Pseudomonadota</taxon>
        <taxon>Gammaproteobacteria</taxon>
        <taxon>Enterobacterales</taxon>
        <taxon>Enterobacteriaceae</taxon>
        <taxon>Escherichia</taxon>
    </lineage>
</organism>
<protein>
    <recommendedName>
        <fullName evidence="1">Multifunctional CCA protein</fullName>
    </recommendedName>
    <domain>
        <recommendedName>
            <fullName evidence="1">CCA-adding enzyme</fullName>
            <ecNumber evidence="1">2.7.7.72</ecNumber>
        </recommendedName>
        <alternativeName>
            <fullName evidence="1">CCA tRNA nucleotidyltransferase</fullName>
        </alternativeName>
        <alternativeName>
            <fullName evidence="1">tRNA CCA-pyrophosphorylase</fullName>
        </alternativeName>
        <alternativeName>
            <fullName evidence="1">tRNA adenylyl-/cytidylyl-transferase</fullName>
        </alternativeName>
        <alternativeName>
            <fullName evidence="1">tRNA nucleotidyltransferase</fullName>
        </alternativeName>
        <alternativeName>
            <fullName evidence="1">tRNA-NT</fullName>
        </alternativeName>
    </domain>
    <domain>
        <recommendedName>
            <fullName evidence="1">2'-nucleotidase</fullName>
            <ecNumber evidence="1">3.1.3.-</ecNumber>
        </recommendedName>
    </domain>
    <domain>
        <recommendedName>
            <fullName evidence="1">2',3'-cyclic phosphodiesterase</fullName>
            <ecNumber evidence="1">3.1.4.-</ecNumber>
        </recommendedName>
    </domain>
    <domain>
        <recommendedName>
            <fullName evidence="1">Phosphatase</fullName>
            <ecNumber evidence="1">3.1.3.-</ecNumber>
        </recommendedName>
    </domain>
</protein>
<gene>
    <name evidence="1" type="primary">cca</name>
    <name type="ordered locus">Ecok1_30740</name>
    <name type="ORF">APECO1_3358</name>
</gene>
<accession>A1AFX8</accession>
<reference key="1">
    <citation type="journal article" date="2007" name="J. Bacteriol.">
        <title>The genome sequence of avian pathogenic Escherichia coli strain O1:K1:H7 shares strong similarities with human extraintestinal pathogenic E. coli genomes.</title>
        <authorList>
            <person name="Johnson T.J."/>
            <person name="Kariyawasam S."/>
            <person name="Wannemuehler Y."/>
            <person name="Mangiamele P."/>
            <person name="Johnson S.J."/>
            <person name="Doetkott C."/>
            <person name="Skyberg J.A."/>
            <person name="Lynne A.M."/>
            <person name="Johnson J.R."/>
            <person name="Nolan L.K."/>
        </authorList>
    </citation>
    <scope>NUCLEOTIDE SEQUENCE [LARGE SCALE GENOMIC DNA]</scope>
</reference>
<name>CCA_ECOK1</name>
<sequence>MKIYLVGGAVRDALLGLPVKDRDWVVVGSTPQEMLDAGYQQVGRDFPVFLHPQTHEEYALARTERKSGSGYTGFTCYAAPDVTLEDDLKRRDLTINALAQDDNGEIIDPYNGLGDLQNRLLRHVSPAFGEDPLRVLRVARFAARYAHLCFRIADETLALMREMTHAGELEHLTPERVWKETENALTTRNPQVFFQVLRDCGALRVLFPEIDALFGVPAPARWHPEIDTGIHTLMTLSMAAMLSPQVDVRFATLCHDLGKGLTPPELWPRHHGHGPAGVKLVEQLCQRLRVPNEIRDLARLVAEFHDLIHTFPMLNPKTIVKLFDSIDAWRKPQRVEQLALTSEADVRGRTGFESADYPQGRWLREAWEVAQSVPTKAVVEAGFKGVEIREELTRRRIAAVAGWKEQRCPKPE</sequence>
<proteinExistence type="inferred from homology"/>
<comment type="function">
    <text evidence="1">Catalyzes the addition and repair of the essential 3'-terminal CCA sequence in tRNAs without using a nucleic acid template. Adds these three nucleotides in the order of C, C, and A to the tRNA nucleotide-73, using CTP and ATP as substrates and producing inorganic pyrophosphate. tRNA 3'-terminal CCA addition is required both for tRNA processing and repair. Also involved in tRNA surveillance by mediating tandem CCA addition to generate a CCACCA at the 3' terminus of unstable tRNAs. While stable tRNAs receive only 3'-terminal CCA, unstable tRNAs are marked with CCACCA and rapidly degraded.</text>
</comment>
<comment type="catalytic activity">
    <reaction evidence="1">
        <text>a tRNA precursor + 2 CTP + ATP = a tRNA with a 3' CCA end + 3 diphosphate</text>
        <dbReference type="Rhea" id="RHEA:14433"/>
        <dbReference type="Rhea" id="RHEA-COMP:10465"/>
        <dbReference type="Rhea" id="RHEA-COMP:10468"/>
        <dbReference type="ChEBI" id="CHEBI:30616"/>
        <dbReference type="ChEBI" id="CHEBI:33019"/>
        <dbReference type="ChEBI" id="CHEBI:37563"/>
        <dbReference type="ChEBI" id="CHEBI:74896"/>
        <dbReference type="ChEBI" id="CHEBI:83071"/>
        <dbReference type="EC" id="2.7.7.72"/>
    </reaction>
</comment>
<comment type="catalytic activity">
    <reaction evidence="1">
        <text>a tRNA with a 3' CCA end + 2 CTP + ATP = a tRNA with a 3' CCACCA end + 3 diphosphate</text>
        <dbReference type="Rhea" id="RHEA:76235"/>
        <dbReference type="Rhea" id="RHEA-COMP:10468"/>
        <dbReference type="Rhea" id="RHEA-COMP:18655"/>
        <dbReference type="ChEBI" id="CHEBI:30616"/>
        <dbReference type="ChEBI" id="CHEBI:33019"/>
        <dbReference type="ChEBI" id="CHEBI:37563"/>
        <dbReference type="ChEBI" id="CHEBI:83071"/>
        <dbReference type="ChEBI" id="CHEBI:195187"/>
    </reaction>
    <physiologicalReaction direction="left-to-right" evidence="1">
        <dbReference type="Rhea" id="RHEA:76236"/>
    </physiologicalReaction>
</comment>
<comment type="cofactor">
    <cofactor evidence="1">
        <name>Mg(2+)</name>
        <dbReference type="ChEBI" id="CHEBI:18420"/>
    </cofactor>
    <text evidence="1">Magnesium is required for nucleotidyltransferase activity.</text>
</comment>
<comment type="cofactor">
    <cofactor evidence="1">
        <name>Ni(2+)</name>
        <dbReference type="ChEBI" id="CHEBI:49786"/>
    </cofactor>
    <text evidence="1">Nickel for phosphatase activity.</text>
</comment>
<comment type="subunit">
    <text evidence="1">Monomer. Can also form homodimers and oligomers.</text>
</comment>
<comment type="domain">
    <text evidence="1">Comprises two domains: an N-terminal domain containing the nucleotidyltransferase activity and a C-terminal HD domain associated with both phosphodiesterase and phosphatase activities.</text>
</comment>
<comment type="miscellaneous">
    <text evidence="1">A single active site specifically recognizes both ATP and CTP and is responsible for their addition.</text>
</comment>
<comment type="similarity">
    <text evidence="1">Belongs to the tRNA nucleotidyltransferase/poly(A) polymerase family. Bacterial CCA-adding enzyme type 1 subfamily.</text>
</comment>